<accession>P0DO41</accession>
<name>CP181_ORIVU</name>
<organism>
    <name type="scientific">Origanum vulgare</name>
    <name type="common">Wild marjoram</name>
    <dbReference type="NCBI Taxonomy" id="39352"/>
    <lineage>
        <taxon>Eukaryota</taxon>
        <taxon>Viridiplantae</taxon>
        <taxon>Streptophyta</taxon>
        <taxon>Embryophyta</taxon>
        <taxon>Tracheophyta</taxon>
        <taxon>Spermatophyta</taxon>
        <taxon>Magnoliopsida</taxon>
        <taxon>eudicotyledons</taxon>
        <taxon>Gunneridae</taxon>
        <taxon>Pentapetalae</taxon>
        <taxon>asterids</taxon>
        <taxon>lamiids</taxon>
        <taxon>Lamiales</taxon>
        <taxon>Lamiaceae</taxon>
        <taxon>Nepetoideae</taxon>
        <taxon>Mentheae</taxon>
        <taxon>Origanum</taxon>
    </lineage>
</organism>
<keyword id="KW-0349">Heme</keyword>
<keyword id="KW-0408">Iron</keyword>
<keyword id="KW-0472">Membrane</keyword>
<keyword id="KW-0479">Metal-binding</keyword>
<keyword id="KW-0503">Monooxygenase</keyword>
<keyword id="KW-0560">Oxidoreductase</keyword>
<keyword id="KW-0735">Signal-anchor</keyword>
<keyword id="KW-0812">Transmembrane</keyword>
<keyword id="KW-1133">Transmembrane helix</keyword>
<evidence type="ECO:0000250" key="1">
    <source>
        <dbReference type="UniProtKB" id="Q96242"/>
    </source>
</evidence>
<evidence type="ECO:0000255" key="2"/>
<evidence type="ECO:0000256" key="3">
    <source>
        <dbReference type="SAM" id="MobiDB-lite"/>
    </source>
</evidence>
<evidence type="ECO:0000269" key="4">
    <source>
    </source>
</evidence>
<evidence type="ECO:0000269" key="5">
    <source ref="1"/>
</evidence>
<evidence type="ECO:0000269" key="6">
    <source ref="3"/>
</evidence>
<evidence type="ECO:0000303" key="7">
    <source>
    </source>
</evidence>
<evidence type="ECO:0000303" key="8">
    <source>
    </source>
</evidence>
<evidence type="ECO:0000303" key="9">
    <source>
    </source>
</evidence>
<evidence type="ECO:0000303" key="10">
    <source>
    </source>
</evidence>
<evidence type="ECO:0000303" key="11">
    <source>
    </source>
</evidence>
<evidence type="ECO:0000303" key="12">
    <source>
    </source>
</evidence>
<evidence type="ECO:0000303" key="13">
    <source>
    </source>
</evidence>
<evidence type="ECO:0000303" key="14">
    <source>
    </source>
</evidence>
<evidence type="ECO:0000303" key="15">
    <source ref="1"/>
</evidence>
<evidence type="ECO:0000305" key="16"/>
<evidence type="ECO:0000305" key="17">
    <source ref="1"/>
</evidence>
<sequence>MDISISWVAIILVISSYFIFMNKWRAAKLPENLPPSPPKLPVIGHLHLLRGGLPQHVLRGITQKYGAVAHLQLGEVYSVVLSSAESTKQAMKVLDPTFADRFDSIGSQIMWYNNNDMIFSRYNDHWRQIRKICVSELLSPKNVRSFGFIRQDEMARLIRVFESSVGVPINASEEISKMSCAIVCRAAFGSVLKDQGLLADLVKEALGMASGFELADLYPSSWLLNLLCFNKYRLRRMRQRLDDILDGFLEEHRVKKSGEFGGEDIIDVLYRMQKDSENKVPITNSGIKGFIFDVFSAGTETSATTIQWALSELMKNPEKLAKAQAEVREKLKGKTNPDVAEVQEIKYLHSVVKETLRLHPPFPLIPRLCKEECEVTGYTIPAKTRILVNVWSIGRDPAYWKDPDTFNPDRFDEVSRDVIGNDFELIPFGAGRRICPGLHFGLANVEVPLAQLLYHFEWKLPQGMTPADMDMSETPGLSGPRKNPLIMVPTIHNPTS</sequence>
<gene>
    <name evidence="15" type="primary">CYP71D181</name>
</gene>
<feature type="chain" id="PRO_0000453328" description="Cytochrome P450 71D181">
    <location>
        <begin position="1"/>
        <end position="496"/>
    </location>
</feature>
<feature type="transmembrane region" description="Helical; Signal-anchor for type II membrane protein" evidence="2">
    <location>
        <begin position="1"/>
        <end position="21"/>
    </location>
</feature>
<feature type="region of interest" description="Disordered" evidence="3">
    <location>
        <begin position="471"/>
        <end position="496"/>
    </location>
</feature>
<feature type="binding site" description="axial binding residue" evidence="1">
    <location>
        <position position="435"/>
    </location>
    <ligand>
        <name>heme</name>
        <dbReference type="ChEBI" id="CHEBI:30413"/>
    </ligand>
    <ligandPart>
        <name>Fe</name>
        <dbReference type="ChEBI" id="CHEBI:18248"/>
    </ligandPart>
</feature>
<proteinExistence type="evidence at protein level"/>
<protein>
    <recommendedName>
        <fullName evidence="15">Cytochrome P450 71D181</fullName>
    </recommendedName>
    <alternativeName>
        <fullName evidence="17">Alpha-terpinene hydroxylase</fullName>
    </alternativeName>
    <alternativeName>
        <fullName evidence="17">Carvacrol synthase</fullName>
        <ecNumber evidence="5">1.14.14.-</ecNumber>
    </alternativeName>
    <alternativeName>
        <fullName evidence="17">Carveol synthase</fullName>
        <ecNumber evidence="5">1.14.14.51</ecNumber>
        <ecNumber evidence="5">1.14.14.53</ecNumber>
    </alternativeName>
    <alternativeName>
        <fullName evidence="17">Gamma-terpinene hydroxylase</fullName>
    </alternativeName>
    <alternativeName>
        <fullName evidence="17">Limonene hydroxylase</fullName>
    </alternativeName>
</protein>
<reference key="1">
    <citation type="thesis" date="2011" institute="Friedrich Schiller University of Jena" country="Germany">
        <title>Biosynthesis of the phenolic monoterpenes, thymol and carvacrol, by terpene synthases and cytochrome P450s in oregano and thyme.</title>
        <authorList>
            <person name="Crocoll C."/>
        </authorList>
    </citation>
    <scope>NUCLEOTIDE SEQUENCE [MRNA]</scope>
    <scope>FUNCTION</scope>
    <scope>CATALYTIC ACTIVITY</scope>
    <scope>PATHWAY</scope>
    <scope>BIOPHYSICOCHEMICAL PROPERTIES</scope>
    <source>
        <strain>cv. Ct</strain>
        <tissue>Leaf</tissue>
    </source>
</reference>
<reference key="2">
    <citation type="journal article" date="2015" name="Crit. Rev. Food Sci. Nutr.">
        <title>The bioactivity and toxicological actions of carvacrol.</title>
        <authorList>
            <person name="Suntres Z.E."/>
            <person name="Coccimiglio J."/>
            <person name="Alipour M."/>
        </authorList>
    </citation>
    <scope>REVIEW ON CARVACROL</scope>
    <scope>BIOTECHNOLOGY</scope>
</reference>
<reference key="3">
    <citation type="journal article" date="2018" name="Ind. Crops Prod.">
        <title>Divergence in tissue-specific expression patterns of genes associated with the terpenoid biosynthesis in two oregano species Origanum vulgare L., and Origanum majorana.</title>
        <authorList>
            <person name="Jan S."/>
            <person name="Mir J.I."/>
            <person name="Shafi W."/>
            <person name="Faktoo S.Z."/>
            <person name="Singh D.B."/>
            <person name="Wijaya L."/>
            <person name="Alyemeni M.N."/>
            <person name="Ahmad P."/>
        </authorList>
    </citation>
    <scope>TISSUE SPECIFICITY</scope>
</reference>
<reference key="4">
    <citation type="journal article" date="2018" name="Int. J. Mol. Sci.">
        <title>Origanum vulgare Terpenoids Induce Oxidative stress and reduce the feeding activity of Spodoptera littoralis.</title>
        <authorList>
            <person name="Agliassa C."/>
            <person name="Maffei M.E."/>
        </authorList>
    </citation>
    <scope>REPRESSION BY SPODOPTERA LITTORALIS</scope>
</reference>
<reference key="5">
    <citation type="journal article" date="2018" name="Phytother. Res.">
        <title>Thymol, thyme, and other plant sources: Health and potential uses.</title>
        <authorList>
            <person name="Salehi B."/>
            <person name="Mishra A.P."/>
            <person name="Shukla I."/>
            <person name="Sharifi-Rad M."/>
            <person name="Contreras M.D.M."/>
            <person name="Segura-Carretero A."/>
            <person name="Fathi H."/>
            <person name="Nasrabadi N.N."/>
            <person name="Kobarfard F."/>
            <person name="Sharifi-Rad J."/>
        </authorList>
    </citation>
    <scope>REVIEW ON THYMOL</scope>
    <scope>BIOTECHNOLOGY</scope>
</reference>
<reference key="6">
    <citation type="journal article" date="2019" name="Nat. Prod. Res.">
        <title>Synthesis and antifungal activity of carvacrol and thymol esters with heteroaromatic carboxylic acids.</title>
        <authorList>
            <person name="Wang K."/>
            <person name="Jiang S."/>
            <person name="Yang Y."/>
            <person name="Fan L."/>
            <person name="Su F."/>
            <person name="Ye M."/>
        </authorList>
    </citation>
    <scope>REVIEW ON CARVACROL AND THYMOL</scope>
    <scope>BIOTECHNOLOGY</scope>
</reference>
<reference key="7">
    <citation type="journal article" date="2020" name="Front. Plant Sci.">
        <title>Carvacrol, a plant metabolite targeting viral protease (Mpro) and ACE2 in host cells can be a possible candidate for COVID-19.</title>
        <authorList>
            <person name="Javed H."/>
            <person name="Meeran M.F.N."/>
            <person name="Jha N.K."/>
            <person name="Ojha S."/>
        </authorList>
    </citation>
    <scope>REVIEW ON CARVACROL EFFECTS ON COVID-19</scope>
    <scope>BIOTECHNOLOGY</scope>
</reference>
<reference key="8">
    <citation type="journal article" date="2020" name="J. Biomol. Struct. Dyn.">
        <title>Identification of phytochemical inhibitors against main protease of COVID-19 using molecular modeling approaches.</title>
        <authorList>
            <person name="Kumar A."/>
            <person name="Choudhir G."/>
            <person name="Shukla S.K."/>
            <person name="Sharma M."/>
            <person name="Tyagi P."/>
            <person name="Bhushan A."/>
            <person name="Rathore M."/>
        </authorList>
    </citation>
    <scope>REVIEW ON CARVACROL EFFECTS ON COVID-19</scope>
    <scope>BIOTECHNOLOGY</scope>
</reference>
<reference key="9">
    <citation type="journal article" date="2020" name="J. Biomol. Struct. Dyn.">
        <title>Synthesis, anticholinesterase activity and molecular modeling studies of novel carvacrol-substituted amide derivatives.</title>
        <authorList>
            <person name="Zengin Kurt B."/>
            <person name="Durdagi S."/>
            <person name="Celebi G."/>
            <person name="Ekhteiari Salmas R."/>
            <person name="Sonmez F."/>
        </authorList>
    </citation>
    <scope>REVIEW ON CARVACROL DERIVATIVES</scope>
    <scope>BIOTECHNOLOGY</scope>
</reference>
<reference key="10">
    <citation type="journal article" date="2020" name="J. Mol. Struct.">
        <title>Computational evaluation of major components from plant essential oils as potent inhibitors of SARS-CoV-2 spike protein.</title>
        <authorList>
            <person name="Kulkarni S.A."/>
            <person name="Nagarajan S.K."/>
            <person name="Ramesh V."/>
            <person name="Palaniyandi V."/>
            <person name="Selvam S.P."/>
            <person name="Madhavan T."/>
        </authorList>
    </citation>
    <scope>REVIEW ON PLANT ESSENTIAL OILS EFFECTS ON COVID-19</scope>
    <scope>BIOTECHNOLOGY</scope>
</reference>
<reference key="11">
    <citation type="journal article" date="2021" name="Front. Chem.">
        <title>Antiviral essential oil components against SARS-CoV-2 in pre-procedural mouth rinses for dental settings during COVID-19: A computational study.</title>
        <authorList>
            <person name="Yadalam P.K."/>
            <person name="Varatharajan K."/>
            <person name="Rajapandian K."/>
            <person name="Chopra P."/>
            <person name="Arumuganainar D."/>
            <person name="Nagarathnam T."/>
            <person name="Sohn H."/>
            <person name="Madhavan T."/>
        </authorList>
    </citation>
    <scope>REVIEW ON PLANT ESSENTIAL OILS EFFECTS ON COVID-19</scope>
    <scope>BIOTECHNOLOGY</scope>
</reference>
<comment type="function">
    <text evidence="5">Involved in the biosynthesis of phenolic monoterpenes natural products thymol and carvacrol which have a broad range of biological activities acting as antimicrobial compounds, insecticides, antioxidants and pharmaceutical agents (Ref.1). Catalyzes the C2-hydroxylation of gamma-terpinene and alpha-terpinene to produce carvacrol (Ref.1). Also mediates the C6-hydroxylation of (4S)-limonene and (4R)-limonene to form carveol (Ref.1).</text>
</comment>
<comment type="catalytic activity">
    <reaction evidence="5">
        <text>alpha-terpinene + 2 reduced [NADPH--hemoprotein reductase] + 2 O2 = carvacrol + 2 oxidized [NADPH--hemoprotein reductase] + 3 H2O + 2 H(+)</text>
        <dbReference type="Rhea" id="RHEA:67412"/>
        <dbReference type="Rhea" id="RHEA-COMP:11964"/>
        <dbReference type="Rhea" id="RHEA-COMP:11965"/>
        <dbReference type="ChEBI" id="CHEBI:3440"/>
        <dbReference type="ChEBI" id="CHEBI:10334"/>
        <dbReference type="ChEBI" id="CHEBI:15377"/>
        <dbReference type="ChEBI" id="CHEBI:15378"/>
        <dbReference type="ChEBI" id="CHEBI:15379"/>
        <dbReference type="ChEBI" id="CHEBI:57618"/>
        <dbReference type="ChEBI" id="CHEBI:58210"/>
    </reaction>
    <physiologicalReaction direction="left-to-right" evidence="5">
        <dbReference type="Rhea" id="RHEA:67413"/>
    </physiologicalReaction>
</comment>
<comment type="catalytic activity">
    <reaction evidence="5">
        <text>gamma-terpinene + 2 reduced [NADPH--hemoprotein reductase] + 2 O2 = carvacrol + 2 oxidized [NADPH--hemoprotein reductase] + 3 H2O + 2 H(+)</text>
        <dbReference type="Rhea" id="RHEA:67404"/>
        <dbReference type="Rhea" id="RHEA-COMP:11964"/>
        <dbReference type="Rhea" id="RHEA-COMP:11965"/>
        <dbReference type="ChEBI" id="CHEBI:3440"/>
        <dbReference type="ChEBI" id="CHEBI:10577"/>
        <dbReference type="ChEBI" id="CHEBI:15377"/>
        <dbReference type="ChEBI" id="CHEBI:15378"/>
        <dbReference type="ChEBI" id="CHEBI:15379"/>
        <dbReference type="ChEBI" id="CHEBI:57618"/>
        <dbReference type="ChEBI" id="CHEBI:58210"/>
    </reaction>
    <physiologicalReaction direction="left-to-right" evidence="5">
        <dbReference type="Rhea" id="RHEA:67405"/>
    </physiologicalReaction>
</comment>
<comment type="catalytic activity">
    <reaction evidence="5">
        <text>(4S)-limonene + reduced [NADPH--hemoprotein reductase] + O2 = (1S,5R)-carveol + oxidized [NADPH--hemoprotein reductase] + H2O + H(+)</text>
        <dbReference type="Rhea" id="RHEA:17945"/>
        <dbReference type="Rhea" id="RHEA-COMP:11964"/>
        <dbReference type="Rhea" id="RHEA-COMP:11965"/>
        <dbReference type="ChEBI" id="CHEBI:15377"/>
        <dbReference type="ChEBI" id="CHEBI:15378"/>
        <dbReference type="ChEBI" id="CHEBI:15379"/>
        <dbReference type="ChEBI" id="CHEBI:15383"/>
        <dbReference type="ChEBI" id="CHEBI:15389"/>
        <dbReference type="ChEBI" id="CHEBI:57618"/>
        <dbReference type="ChEBI" id="CHEBI:58210"/>
        <dbReference type="EC" id="1.14.14.51"/>
    </reaction>
    <physiologicalReaction direction="left-to-right" evidence="5">
        <dbReference type="Rhea" id="RHEA:17946"/>
    </physiologicalReaction>
</comment>
<comment type="catalytic activity">
    <reaction evidence="5">
        <text>(4R)-limonene + reduced [NADPH--hemoprotein reductase] + O2 = (1R,5S)-carveol + oxidized [NADPH--hemoprotein reductase] + H2O + H(+)</text>
        <dbReference type="Rhea" id="RHEA:18957"/>
        <dbReference type="Rhea" id="RHEA-COMP:11964"/>
        <dbReference type="Rhea" id="RHEA-COMP:11965"/>
        <dbReference type="ChEBI" id="CHEBI:15377"/>
        <dbReference type="ChEBI" id="CHEBI:15378"/>
        <dbReference type="ChEBI" id="CHEBI:15379"/>
        <dbReference type="ChEBI" id="CHEBI:15382"/>
        <dbReference type="ChEBI" id="CHEBI:15388"/>
        <dbReference type="ChEBI" id="CHEBI:57618"/>
        <dbReference type="ChEBI" id="CHEBI:58210"/>
        <dbReference type="EC" id="1.14.14.53"/>
    </reaction>
    <physiologicalReaction direction="left-to-right" evidence="5">
        <dbReference type="Rhea" id="RHEA:18958"/>
    </physiologicalReaction>
</comment>
<comment type="cofactor">
    <cofactor evidence="1">
        <name>heme</name>
        <dbReference type="ChEBI" id="CHEBI:30413"/>
    </cofactor>
</comment>
<comment type="biophysicochemical properties">
    <phDependence>
        <text evidence="5">Optimum pH is 6.8-7.</text>
    </phDependence>
</comment>
<comment type="pathway">
    <text evidence="5">Secondary metabolite biosynthesis; terpenoid biosynthesis.</text>
</comment>
<comment type="subcellular location">
    <subcellularLocation>
        <location evidence="2">Membrane</location>
        <topology evidence="16">Single-pass type II membrane protein</topology>
    </subcellularLocation>
</comment>
<comment type="tissue specificity">
    <text evidence="6">Expressed at low levels in flowers, leaves and stems.</text>
</comment>
<comment type="induction">
    <text evidence="4">Slightly repressed by Spodoptera littoralis, a herbivory insect.</text>
</comment>
<comment type="biotechnology">
    <text evidence="8 9 12 14">The monoterpenic phenol thymol is widely used as a fragrance and a flavoring ingredient in food and cosmetic industries (PubMed:29785774). Its derivatives have also several biological and pharmacological properties such as antimicrobial, antioxidant, anticarcinogenesis, anti-inflammatory and antispasmodic activities (PubMed:29785774, PubMed:29874939). Medical applications include the treatment of disorders affecting the respiratory, nervous, and cardiovascular systems (PubMed:29785774). It may also act as a growth enhancer and immunomodulator (PubMed:29785774). Thymol may also have antiviral activity toward COVID-19 by binding to the S1 receptor binding domain of the SARS-CoV-2 spike (S) glycoprotein (PubMed:32834111, PubMed:33855010).</text>
</comment>
<comment type="biotechnology">
    <text evidence="7 9 10 11 12 13 14">The monoterpenic phenol carvacrol is commonly used as a fragrance and a food flavoring ingredient and preservative (PubMed:24915411). Its derivatives exhibit also various biological and pharmacological properties including antioxidant, antibacterial, antifungal, insecticid, nematicid, anticancer, anti-inflammatory, hepatoprotective, spasmolytic, and vasorelaxant (PubMed:24915411, PubMed:29874939, PubMed:30836858, PubMed:33664752). Phytochemical inhibitor targeting the main SARS-CoV-2 viral protease (Mpro) and ACE2 in human host cells, carvacrol is a possible candidate for treating COVID-19 (PubMed:32448034, PubMed:33664752). Carvacrol may also have antiviral activity toward COVID-19 by binding to the S1 receptor binding domain of the SARS-CoV-2 spike (S) glycoprotein (PubMed:32834111, PubMed:33855010).</text>
</comment>
<comment type="similarity">
    <text evidence="16">Belongs to the cytochrome P450 family.</text>
</comment>
<dbReference type="EC" id="1.14.14.-" evidence="5"/>
<dbReference type="EC" id="1.14.14.51" evidence="5"/>
<dbReference type="EC" id="1.14.14.53" evidence="5"/>
<dbReference type="SMR" id="P0DO41"/>
<dbReference type="UniPathway" id="UPA00213"/>
<dbReference type="GO" id="GO:0016020">
    <property type="term" value="C:membrane"/>
    <property type="evidence" value="ECO:0007669"/>
    <property type="project" value="UniProtKB-SubCell"/>
</dbReference>
<dbReference type="GO" id="GO:0020037">
    <property type="term" value="F:heme binding"/>
    <property type="evidence" value="ECO:0007669"/>
    <property type="project" value="InterPro"/>
</dbReference>
<dbReference type="GO" id="GO:0005506">
    <property type="term" value="F:iron ion binding"/>
    <property type="evidence" value="ECO:0007669"/>
    <property type="project" value="InterPro"/>
</dbReference>
<dbReference type="GO" id="GO:0004497">
    <property type="term" value="F:monooxygenase activity"/>
    <property type="evidence" value="ECO:0007669"/>
    <property type="project" value="UniProtKB-KW"/>
</dbReference>
<dbReference type="GO" id="GO:0016705">
    <property type="term" value="F:oxidoreductase activity, acting on paired donors, with incorporation or reduction of molecular oxygen"/>
    <property type="evidence" value="ECO:0007669"/>
    <property type="project" value="InterPro"/>
</dbReference>
<dbReference type="GO" id="GO:0009625">
    <property type="term" value="P:response to insect"/>
    <property type="evidence" value="ECO:0000270"/>
    <property type="project" value="UniProtKB"/>
</dbReference>
<dbReference type="GO" id="GO:0016114">
    <property type="term" value="P:terpenoid biosynthetic process"/>
    <property type="evidence" value="ECO:0007669"/>
    <property type="project" value="UniProtKB-UniPathway"/>
</dbReference>
<dbReference type="CDD" id="cd11072">
    <property type="entry name" value="CYP71-like"/>
    <property type="match status" value="1"/>
</dbReference>
<dbReference type="FunFam" id="1.10.630.10:FF:000043">
    <property type="entry name" value="Cytochrome P450 99A2"/>
    <property type="match status" value="1"/>
</dbReference>
<dbReference type="Gene3D" id="1.10.630.10">
    <property type="entry name" value="Cytochrome P450"/>
    <property type="match status" value="1"/>
</dbReference>
<dbReference type="InterPro" id="IPR052306">
    <property type="entry name" value="CYP450_71D"/>
</dbReference>
<dbReference type="InterPro" id="IPR001128">
    <property type="entry name" value="Cyt_P450"/>
</dbReference>
<dbReference type="InterPro" id="IPR017972">
    <property type="entry name" value="Cyt_P450_CS"/>
</dbReference>
<dbReference type="InterPro" id="IPR002401">
    <property type="entry name" value="Cyt_P450_E_grp-I"/>
</dbReference>
<dbReference type="InterPro" id="IPR036396">
    <property type="entry name" value="Cyt_P450_sf"/>
</dbReference>
<dbReference type="PANTHER" id="PTHR47953:SF19">
    <property type="entry name" value="OS06G0641600 PROTEIN"/>
    <property type="match status" value="1"/>
</dbReference>
<dbReference type="PANTHER" id="PTHR47953">
    <property type="entry name" value="OS08G0105600 PROTEIN"/>
    <property type="match status" value="1"/>
</dbReference>
<dbReference type="Pfam" id="PF00067">
    <property type="entry name" value="p450"/>
    <property type="match status" value="1"/>
</dbReference>
<dbReference type="PRINTS" id="PR00463">
    <property type="entry name" value="EP450I"/>
</dbReference>
<dbReference type="PRINTS" id="PR00385">
    <property type="entry name" value="P450"/>
</dbReference>
<dbReference type="SUPFAM" id="SSF48264">
    <property type="entry name" value="Cytochrome P450"/>
    <property type="match status" value="1"/>
</dbReference>
<dbReference type="PROSITE" id="PS00086">
    <property type="entry name" value="CYTOCHROME_P450"/>
    <property type="match status" value="1"/>
</dbReference>